<feature type="chain" id="PRO_0000391804" description="Pyruvate kinase">
    <location>
        <begin position="1"/>
        <end position="485"/>
    </location>
</feature>
<feature type="binding site" evidence="1">
    <location>
        <position position="33"/>
    </location>
    <ligand>
        <name>substrate</name>
    </ligand>
</feature>
<feature type="binding site" evidence="2">
    <location>
        <begin position="35"/>
        <end position="38"/>
    </location>
    <ligand>
        <name>ATP</name>
        <dbReference type="ChEBI" id="CHEBI:30616"/>
    </ligand>
</feature>
<feature type="binding site" evidence="1">
    <location>
        <position position="35"/>
    </location>
    <ligand>
        <name>K(+)</name>
        <dbReference type="ChEBI" id="CHEBI:29103"/>
    </ligand>
</feature>
<feature type="binding site" evidence="1">
    <location>
        <position position="37"/>
    </location>
    <ligand>
        <name>K(+)</name>
        <dbReference type="ChEBI" id="CHEBI:29103"/>
    </ligand>
</feature>
<feature type="binding site" evidence="1">
    <location>
        <position position="67"/>
    </location>
    <ligand>
        <name>K(+)</name>
        <dbReference type="ChEBI" id="CHEBI:29103"/>
    </ligand>
</feature>
<feature type="binding site" evidence="1">
    <location>
        <position position="68"/>
    </location>
    <ligand>
        <name>K(+)</name>
        <dbReference type="ChEBI" id="CHEBI:29103"/>
    </ligand>
</feature>
<feature type="binding site" evidence="2">
    <location>
        <position position="74"/>
    </location>
    <ligand>
        <name>ATP</name>
        <dbReference type="ChEBI" id="CHEBI:30616"/>
    </ligand>
</feature>
<feature type="binding site" evidence="2">
    <location>
        <position position="155"/>
    </location>
    <ligand>
        <name>ATP</name>
        <dbReference type="ChEBI" id="CHEBI:30616"/>
    </ligand>
</feature>
<feature type="binding site" evidence="1">
    <location>
        <position position="221"/>
    </location>
    <ligand>
        <name>Mg(2+)</name>
        <dbReference type="ChEBI" id="CHEBI:18420"/>
    </ligand>
</feature>
<feature type="binding site" evidence="1">
    <location>
        <position position="244"/>
    </location>
    <ligand>
        <name>substrate</name>
    </ligand>
</feature>
<feature type="binding site" evidence="1">
    <location>
        <position position="245"/>
    </location>
    <ligand>
        <name>Mg(2+)</name>
        <dbReference type="ChEBI" id="CHEBI:18420"/>
    </ligand>
</feature>
<feature type="binding site" evidence="1">
    <location>
        <position position="245"/>
    </location>
    <ligand>
        <name>substrate</name>
    </ligand>
</feature>
<feature type="binding site" evidence="1">
    <location>
        <position position="277"/>
    </location>
    <ligand>
        <name>substrate</name>
    </ligand>
</feature>
<feature type="site" description="Transition state stabilizer" evidence="1">
    <location>
        <position position="219"/>
    </location>
</feature>
<feature type="sequence conflict" description="In Ref. 1; AAB41226." evidence="3" ref="1">
    <original>GVTLYPSCVF</original>
    <variation>ALLFIQVVYS</variation>
    <location>
        <begin position="104"/>
        <end position="113"/>
    </location>
</feature>
<feature type="sequence conflict" description="In Ref. 1; AAB41226." evidence="3" ref="1">
    <original>IGFSG</original>
    <variation>NWVFW</variation>
    <location>
        <begin position="362"/>
        <end position="366"/>
    </location>
</feature>
<keyword id="KW-0067">ATP-binding</keyword>
<keyword id="KW-0324">Glycolysis</keyword>
<keyword id="KW-0418">Kinase</keyword>
<keyword id="KW-0460">Magnesium</keyword>
<keyword id="KW-0479">Metal-binding</keyword>
<keyword id="KW-0547">Nucleotide-binding</keyword>
<keyword id="KW-0630">Potassium</keyword>
<keyword id="KW-0670">Pyruvate</keyword>
<keyword id="KW-0808">Transferase</keyword>
<name>KPYK_CHLT2</name>
<gene>
    <name type="primary">pyk</name>
    <name type="synonym">pykF</name>
    <name type="ordered locus">CTL0586</name>
</gene>
<proteinExistence type="inferred from homology"/>
<protein>
    <recommendedName>
        <fullName>Pyruvate kinase</fullName>
        <shortName>PK</shortName>
        <ecNumber>2.7.1.40</ecNumber>
    </recommendedName>
</protein>
<accession>B0B7Q0</accession>
<accession>O84336</accession>
<accession>P94685</accession>
<organism>
    <name type="scientific">Chlamydia trachomatis serovar L2 (strain ATCC VR-902B / DSM 19102 / 434/Bu)</name>
    <dbReference type="NCBI Taxonomy" id="471472"/>
    <lineage>
        <taxon>Bacteria</taxon>
        <taxon>Pseudomonadati</taxon>
        <taxon>Chlamydiota</taxon>
        <taxon>Chlamydiia</taxon>
        <taxon>Chlamydiales</taxon>
        <taxon>Chlamydiaceae</taxon>
        <taxon>Chlamydia/Chlamydophila group</taxon>
        <taxon>Chlamydia</taxon>
    </lineage>
</organism>
<evidence type="ECO:0000250" key="1"/>
<evidence type="ECO:0000250" key="2">
    <source>
        <dbReference type="UniProtKB" id="P14618"/>
    </source>
</evidence>
<evidence type="ECO:0000305" key="3"/>
<reference key="1">
    <citation type="journal article" date="1999" name="Mol. Microbiol.">
        <title>Glucose metabolism in Chlamydia trachomatis: the 'energy parasite' hypothesis revisited.</title>
        <authorList>
            <person name="Iliffe-Lee E.R."/>
            <person name="McClarty G."/>
        </authorList>
    </citation>
    <scope>NUCLEOTIDE SEQUENCE [GENOMIC DNA]</scope>
</reference>
<reference key="2">
    <citation type="journal article" date="2008" name="Genome Res.">
        <title>Chlamydia trachomatis: genome sequence analysis of lymphogranuloma venereum isolates.</title>
        <authorList>
            <person name="Thomson N.R."/>
            <person name="Holden M.T.G."/>
            <person name="Carder C."/>
            <person name="Lennard N."/>
            <person name="Lockey S.J."/>
            <person name="Marsh P."/>
            <person name="Skipp P."/>
            <person name="O'Connor C.D."/>
            <person name="Goodhead I."/>
            <person name="Norbertzcak H."/>
            <person name="Harris B."/>
            <person name="Ormond D."/>
            <person name="Rance R."/>
            <person name="Quail M.A."/>
            <person name="Parkhill J."/>
            <person name="Stephens R.S."/>
            <person name="Clarke I.N."/>
        </authorList>
    </citation>
    <scope>NUCLEOTIDE SEQUENCE [LARGE SCALE GENOMIC DNA]</scope>
    <source>
        <strain>ATCC VR-902B / DSM 19102 / 434/Bu</strain>
    </source>
</reference>
<dbReference type="EC" id="2.7.1.40"/>
<dbReference type="EMBL" id="U83196">
    <property type="protein sequence ID" value="AAB41226.1"/>
    <property type="status" value="ALT_INIT"/>
    <property type="molecule type" value="Genomic_DNA"/>
</dbReference>
<dbReference type="EMBL" id="AM884176">
    <property type="protein sequence ID" value="CAP04026.1"/>
    <property type="molecule type" value="Genomic_DNA"/>
</dbReference>
<dbReference type="RefSeq" id="WP_009873733.1">
    <property type="nucleotide sequence ID" value="NC_010287.1"/>
</dbReference>
<dbReference type="RefSeq" id="YP_001654661.1">
    <property type="nucleotide sequence ID" value="NC_010287.1"/>
</dbReference>
<dbReference type="SMR" id="B0B7Q0"/>
<dbReference type="KEGG" id="ctb:CTL0586"/>
<dbReference type="PATRIC" id="fig|471472.4.peg.631"/>
<dbReference type="HOGENOM" id="CLU_015439_0_2_0"/>
<dbReference type="SABIO-RK" id="B0B7Q0"/>
<dbReference type="UniPathway" id="UPA00109">
    <property type="reaction ID" value="UER00188"/>
</dbReference>
<dbReference type="Proteomes" id="UP001154402">
    <property type="component" value="Chromosome"/>
</dbReference>
<dbReference type="GO" id="GO:0005524">
    <property type="term" value="F:ATP binding"/>
    <property type="evidence" value="ECO:0007669"/>
    <property type="project" value="UniProtKB-KW"/>
</dbReference>
<dbReference type="GO" id="GO:0016301">
    <property type="term" value="F:kinase activity"/>
    <property type="evidence" value="ECO:0007669"/>
    <property type="project" value="UniProtKB-KW"/>
</dbReference>
<dbReference type="GO" id="GO:0000287">
    <property type="term" value="F:magnesium ion binding"/>
    <property type="evidence" value="ECO:0007669"/>
    <property type="project" value="InterPro"/>
</dbReference>
<dbReference type="GO" id="GO:0030955">
    <property type="term" value="F:potassium ion binding"/>
    <property type="evidence" value="ECO:0007669"/>
    <property type="project" value="InterPro"/>
</dbReference>
<dbReference type="GO" id="GO:0004743">
    <property type="term" value="F:pyruvate kinase activity"/>
    <property type="evidence" value="ECO:0007669"/>
    <property type="project" value="UniProtKB-EC"/>
</dbReference>
<dbReference type="Gene3D" id="3.20.20.60">
    <property type="entry name" value="Phosphoenolpyruvate-binding domains"/>
    <property type="match status" value="1"/>
</dbReference>
<dbReference type="Gene3D" id="2.40.33.10">
    <property type="entry name" value="PK beta-barrel domain-like"/>
    <property type="match status" value="1"/>
</dbReference>
<dbReference type="Gene3D" id="3.40.1380.20">
    <property type="entry name" value="Pyruvate kinase, C-terminal domain"/>
    <property type="match status" value="1"/>
</dbReference>
<dbReference type="InterPro" id="IPR001697">
    <property type="entry name" value="Pyr_Knase"/>
</dbReference>
<dbReference type="InterPro" id="IPR015813">
    <property type="entry name" value="Pyrv/PenolPyrv_kinase-like_dom"/>
</dbReference>
<dbReference type="InterPro" id="IPR040442">
    <property type="entry name" value="Pyrv_kinase-like_dom_sf"/>
</dbReference>
<dbReference type="InterPro" id="IPR011037">
    <property type="entry name" value="Pyrv_Knase-like_insert_dom_sf"/>
</dbReference>
<dbReference type="InterPro" id="IPR015793">
    <property type="entry name" value="Pyrv_Knase_brl"/>
</dbReference>
<dbReference type="InterPro" id="IPR015795">
    <property type="entry name" value="Pyrv_Knase_C"/>
</dbReference>
<dbReference type="InterPro" id="IPR036918">
    <property type="entry name" value="Pyrv_Knase_C_sf"/>
</dbReference>
<dbReference type="InterPro" id="IPR015806">
    <property type="entry name" value="Pyrv_Knase_insert_dom_sf"/>
</dbReference>
<dbReference type="NCBIfam" id="NF004491">
    <property type="entry name" value="PRK05826.1"/>
    <property type="match status" value="1"/>
</dbReference>
<dbReference type="NCBIfam" id="NF004978">
    <property type="entry name" value="PRK06354.1"/>
    <property type="match status" value="1"/>
</dbReference>
<dbReference type="NCBIfam" id="TIGR01064">
    <property type="entry name" value="pyruv_kin"/>
    <property type="match status" value="1"/>
</dbReference>
<dbReference type="PANTHER" id="PTHR11817">
    <property type="entry name" value="PYRUVATE KINASE"/>
    <property type="match status" value="1"/>
</dbReference>
<dbReference type="Pfam" id="PF00224">
    <property type="entry name" value="PK"/>
    <property type="match status" value="1"/>
</dbReference>
<dbReference type="Pfam" id="PF02887">
    <property type="entry name" value="PK_C"/>
    <property type="match status" value="1"/>
</dbReference>
<dbReference type="PRINTS" id="PR01050">
    <property type="entry name" value="PYRUVTKNASE"/>
</dbReference>
<dbReference type="SUPFAM" id="SSF51621">
    <property type="entry name" value="Phosphoenolpyruvate/pyruvate domain"/>
    <property type="match status" value="1"/>
</dbReference>
<dbReference type="SUPFAM" id="SSF50800">
    <property type="entry name" value="PK beta-barrel domain-like"/>
    <property type="match status" value="1"/>
</dbReference>
<dbReference type="SUPFAM" id="SSF52935">
    <property type="entry name" value="PK C-terminal domain-like"/>
    <property type="match status" value="1"/>
</dbReference>
<sequence length="485" mass="53631">MIARTKIICTIGPATNTPEMLEKLLDAGMNVARLNFSHGTHESHGRTIAILKELREKRQVPLAIMLDTKGPEIRLGQVESPIKVQPGDRLTLVSKEILGSKESGVTLYPSCVFPYVRERAPVLIDDGYIQAVVVNAQEHMVEIEFQNSGEIKSNKSLSIKDIDVALPFMTEKDIADLKFGVEQELDLIAASFVRCNEDIDSMRKVLESFGRPNMPIIAKIENHLGVQNFQEIARAADGIMIARGDLGIELSIVEVPGLQKFMARASRETGRFCITATQMLESMIRNPLPTRAEVSDVANAIYDGTSAVMLSGETASGAHPVHAVKTMRSIIQETEKTFDYHAFFQLNDKNSALKVSPYLEAIGFSGIQIAEKASAKAIIVYTQTGGSPMFLSKYRPYLPIIAVTPNRNVYYRLAVEWGVYPMLTLESNRTVWRHQACVYGVEKGILSNYDKILVFSRGAGMQDTNNLTLTTVHDALSPSLDEIVP</sequence>
<comment type="catalytic activity">
    <reaction>
        <text>pyruvate + ATP = phosphoenolpyruvate + ADP + H(+)</text>
        <dbReference type="Rhea" id="RHEA:18157"/>
        <dbReference type="ChEBI" id="CHEBI:15361"/>
        <dbReference type="ChEBI" id="CHEBI:15378"/>
        <dbReference type="ChEBI" id="CHEBI:30616"/>
        <dbReference type="ChEBI" id="CHEBI:58702"/>
        <dbReference type="ChEBI" id="CHEBI:456216"/>
        <dbReference type="EC" id="2.7.1.40"/>
    </reaction>
</comment>
<comment type="cofactor">
    <cofactor>
        <name>Mg(2+)</name>
        <dbReference type="ChEBI" id="CHEBI:18420"/>
    </cofactor>
</comment>
<comment type="cofactor">
    <cofactor>
        <name>K(+)</name>
        <dbReference type="ChEBI" id="CHEBI:29103"/>
    </cofactor>
</comment>
<comment type="pathway">
    <text>Carbohydrate degradation; glycolysis; pyruvate from D-glyceraldehyde 3-phosphate: step 5/5.</text>
</comment>
<comment type="subunit">
    <text evidence="1">Homotetramer.</text>
</comment>
<comment type="similarity">
    <text evidence="3">Belongs to the pyruvate kinase family.</text>
</comment>
<comment type="sequence caution" evidence="3">
    <conflict type="erroneous initiation">
        <sequence resource="EMBL-CDS" id="AAB41226"/>
    </conflict>
</comment>